<dbReference type="EMBL" id="S60099">
    <property type="protein sequence ID" value="AAC60589.1"/>
    <property type="molecule type" value="mRNA"/>
</dbReference>
<dbReference type="EMBL" id="L09209">
    <property type="protein sequence ID" value="AAA35526.1"/>
    <property type="molecule type" value="mRNA"/>
</dbReference>
<dbReference type="EMBL" id="L27631">
    <property type="protein sequence ID" value="AAC41701.1"/>
    <property type="molecule type" value="mRNA"/>
</dbReference>
<dbReference type="EMBL" id="Z22572">
    <property type="protein sequence ID" value="CAA80295.1"/>
    <property type="molecule type" value="mRNA"/>
</dbReference>
<dbReference type="EMBL" id="AK128162">
    <property type="protein sequence ID" value="BAG54641.1"/>
    <property type="status" value="ALT_FRAME"/>
    <property type="molecule type" value="mRNA"/>
</dbReference>
<dbReference type="EMBL" id="L19597">
    <property type="protein sequence ID" value="AAA35601.1"/>
    <property type="molecule type" value="mRNA"/>
</dbReference>
<dbReference type="EMBL" id="L23113">
    <property type="protein sequence ID" value="AAA36032.1"/>
    <property type="molecule type" value="mRNA"/>
</dbReference>
<dbReference type="EMBL" id="L23114">
    <property type="protein sequence ID" value="AAA36130.1"/>
    <property type="molecule type" value="mRNA"/>
</dbReference>
<dbReference type="EMBL" id="AF168956">
    <property type="protein sequence ID" value="AAD47291.1"/>
    <property type="molecule type" value="mRNA"/>
</dbReference>
<dbReference type="EMBL" id="AP001183">
    <property type="status" value="NOT_ANNOTATED_CDS"/>
    <property type="molecule type" value="Genomic_DNA"/>
</dbReference>
<dbReference type="EMBL" id="AP003041">
    <property type="status" value="NOT_ANNOTATED_CDS"/>
    <property type="molecule type" value="Genomic_DNA"/>
</dbReference>
<dbReference type="EMBL" id="BC000373">
    <property type="protein sequence ID" value="AAH00373.1"/>
    <property type="molecule type" value="mRNA"/>
</dbReference>
<dbReference type="EMBL" id="BC004371">
    <property type="protein sequence ID" value="AAH04371.1"/>
    <property type="molecule type" value="mRNA"/>
</dbReference>
<dbReference type="CCDS" id="CCDS44773.1">
    <molecule id="Q06481-3"/>
</dbReference>
<dbReference type="CCDS" id="CCDS44774.1">
    <molecule id="Q06481-4"/>
</dbReference>
<dbReference type="CCDS" id="CCDS44775.1">
    <molecule id="Q06481-5"/>
</dbReference>
<dbReference type="CCDS" id="CCDS58196.1">
    <molecule id="Q06481-6"/>
</dbReference>
<dbReference type="CCDS" id="CCDS8486.1">
    <molecule id="Q06481-1"/>
</dbReference>
<dbReference type="PIR" id="A49321">
    <property type="entry name" value="A49321"/>
</dbReference>
<dbReference type="PIR" id="S41082">
    <property type="entry name" value="S41082"/>
</dbReference>
<dbReference type="RefSeq" id="NP_001135748.1">
    <molecule id="Q06481-3"/>
    <property type="nucleotide sequence ID" value="NM_001142276.2"/>
</dbReference>
<dbReference type="RefSeq" id="NP_001135749.1">
    <molecule id="Q06481-4"/>
    <property type="nucleotide sequence ID" value="NM_001142277.2"/>
</dbReference>
<dbReference type="RefSeq" id="NP_001135750.1">
    <molecule id="Q06481-5"/>
    <property type="nucleotide sequence ID" value="NM_001142278.2"/>
</dbReference>
<dbReference type="RefSeq" id="NP_001230228.1">
    <molecule id="Q06481-6"/>
    <property type="nucleotide sequence ID" value="NM_001243299.2"/>
</dbReference>
<dbReference type="RefSeq" id="NP_001633.1">
    <molecule id="Q06481-1"/>
    <property type="nucleotide sequence ID" value="NM_001642.3"/>
</dbReference>
<dbReference type="PDB" id="5JBT">
    <property type="method" value="X-ray"/>
    <property type="resolution" value="1.40 A"/>
    <property type="chains" value="X=307-320, Y=323-360"/>
</dbReference>
<dbReference type="PDB" id="5TPT">
    <property type="method" value="X-ray"/>
    <property type="resolution" value="2.42 A"/>
    <property type="chains" value="A/B=373-569"/>
</dbReference>
<dbReference type="PDB" id="8RQ6">
    <property type="method" value="NMR"/>
    <property type="chains" value="A=689-719"/>
</dbReference>
<dbReference type="PDBsum" id="5JBT"/>
<dbReference type="PDBsum" id="5TPT"/>
<dbReference type="PDBsum" id="8RQ6"/>
<dbReference type="SMR" id="Q06481"/>
<dbReference type="BioGRID" id="106831">
    <property type="interactions" value="140"/>
</dbReference>
<dbReference type="CORUM" id="Q06481"/>
<dbReference type="DIP" id="DIP-31047N"/>
<dbReference type="ELM" id="Q06481"/>
<dbReference type="FunCoup" id="Q06481">
    <property type="interactions" value="1516"/>
</dbReference>
<dbReference type="IntAct" id="Q06481">
    <property type="interactions" value="102"/>
</dbReference>
<dbReference type="MINT" id="Q06481"/>
<dbReference type="STRING" id="9606.ENSP00000497691"/>
<dbReference type="DrugBank" id="DB01593">
    <property type="generic name" value="Zinc"/>
</dbReference>
<dbReference type="DrugBank" id="DB14487">
    <property type="generic name" value="Zinc acetate"/>
</dbReference>
<dbReference type="DrugBank" id="DB14533">
    <property type="generic name" value="Zinc chloride"/>
</dbReference>
<dbReference type="DrugBank" id="DB14548">
    <property type="generic name" value="Zinc sulfate, unspecified form"/>
</dbReference>
<dbReference type="MEROPS" id="I02.016"/>
<dbReference type="GlyConnect" id="1008">
    <property type="glycosylation" value="4 N-Linked glycans (1 site)"/>
</dbReference>
<dbReference type="GlyCosmos" id="Q06481">
    <property type="glycosylation" value="4 sites, 5 glycans"/>
</dbReference>
<dbReference type="GlyGen" id="Q06481">
    <property type="glycosylation" value="10 sites, 22 N-linked glycans (1 site), 2 O-linked glycans (8 sites)"/>
</dbReference>
<dbReference type="iPTMnet" id="Q06481"/>
<dbReference type="PhosphoSitePlus" id="Q06481"/>
<dbReference type="SwissPalm" id="Q06481"/>
<dbReference type="BioMuta" id="APLP2"/>
<dbReference type="DMDM" id="1703344"/>
<dbReference type="jPOST" id="Q06481"/>
<dbReference type="MassIVE" id="Q06481"/>
<dbReference type="PaxDb" id="9606-ENSP00000263574"/>
<dbReference type="PeptideAtlas" id="Q06481"/>
<dbReference type="ProteomicsDB" id="43292"/>
<dbReference type="ProteomicsDB" id="58449">
    <molecule id="Q06481-1"/>
</dbReference>
<dbReference type="ProteomicsDB" id="58450">
    <molecule id="Q06481-2"/>
</dbReference>
<dbReference type="ProteomicsDB" id="58451">
    <molecule id="Q06481-3"/>
</dbReference>
<dbReference type="ProteomicsDB" id="58452">
    <molecule id="Q06481-4"/>
</dbReference>
<dbReference type="ProteomicsDB" id="58453">
    <molecule id="Q06481-5"/>
</dbReference>
<dbReference type="Pumba" id="Q06481"/>
<dbReference type="TopDownProteomics" id="Q06481-5">
    <molecule id="Q06481-5"/>
</dbReference>
<dbReference type="Antibodypedia" id="33074">
    <property type="antibodies" value="377 antibodies from 35 providers"/>
</dbReference>
<dbReference type="DNASU" id="334"/>
<dbReference type="Ensembl" id="ENST00000263574.9">
    <molecule id="Q06481-1"/>
    <property type="protein sequence ID" value="ENSP00000263574.5"/>
    <property type="gene ID" value="ENSG00000084234.18"/>
</dbReference>
<dbReference type="Ensembl" id="ENST00000278756.7">
    <molecule id="Q06481-6"/>
    <property type="protein sequence ID" value="ENSP00000278756.7"/>
    <property type="gene ID" value="ENSG00000084234.18"/>
</dbReference>
<dbReference type="Ensembl" id="ENST00000338167.10">
    <molecule id="Q06481-3"/>
    <property type="protein sequence ID" value="ENSP00000345444.5"/>
    <property type="gene ID" value="ENSG00000084234.18"/>
</dbReference>
<dbReference type="Ensembl" id="ENST00000345598.9">
    <molecule id="Q06481-5"/>
    <property type="protein sequence ID" value="ENSP00000263575.6"/>
    <property type="gene ID" value="ENSG00000084234.18"/>
</dbReference>
<dbReference type="Ensembl" id="ENST00000528499.5">
    <molecule id="Q06481-4"/>
    <property type="protein sequence ID" value="ENSP00000435914.1"/>
    <property type="gene ID" value="ENSG00000084234.18"/>
</dbReference>
<dbReference type="Ensembl" id="ENST00000650012.1">
    <molecule id="Q06481-1"/>
    <property type="protein sequence ID" value="ENSP00000497691.1"/>
    <property type="gene ID" value="ENSG00000084234.18"/>
</dbReference>
<dbReference type="GeneID" id="334"/>
<dbReference type="KEGG" id="hsa:334"/>
<dbReference type="MANE-Select" id="ENST00000338167.10">
    <molecule id="Q06481-3"/>
    <property type="protein sequence ID" value="ENSP00000345444.5"/>
    <property type="RefSeq nucleotide sequence ID" value="NM_001142276.2"/>
    <property type="RefSeq protein sequence ID" value="NP_001135748.1"/>
</dbReference>
<dbReference type="UCSC" id="uc001qfp.4">
    <molecule id="Q06481-1"/>
    <property type="organism name" value="human"/>
</dbReference>
<dbReference type="AGR" id="HGNC:598"/>
<dbReference type="CTD" id="334"/>
<dbReference type="DisGeNET" id="334"/>
<dbReference type="GeneCards" id="APLP2"/>
<dbReference type="HGNC" id="HGNC:598">
    <property type="gene designation" value="APLP2"/>
</dbReference>
<dbReference type="HPA" id="ENSG00000084234">
    <property type="expression patterns" value="Low tissue specificity"/>
</dbReference>
<dbReference type="MIM" id="104776">
    <property type="type" value="gene"/>
</dbReference>
<dbReference type="neXtProt" id="NX_Q06481"/>
<dbReference type="OpenTargets" id="ENSG00000084234"/>
<dbReference type="PharmGKB" id="PA24885"/>
<dbReference type="VEuPathDB" id="HostDB:ENSG00000084234"/>
<dbReference type="eggNOG" id="KOG3540">
    <property type="taxonomic scope" value="Eukaryota"/>
</dbReference>
<dbReference type="GeneTree" id="ENSGT00530000063252"/>
<dbReference type="HOGENOM" id="CLU_014607_2_1_1"/>
<dbReference type="InParanoid" id="Q06481"/>
<dbReference type="OMA" id="PYRILHA"/>
<dbReference type="OrthoDB" id="6147836at2759"/>
<dbReference type="PAN-GO" id="Q06481">
    <property type="GO annotations" value="2 GO annotations based on evolutionary models"/>
</dbReference>
<dbReference type="PhylomeDB" id="Q06481"/>
<dbReference type="TreeFam" id="TF317274"/>
<dbReference type="PathwayCommons" id="Q06481"/>
<dbReference type="Reactome" id="R-HSA-114608">
    <property type="pathway name" value="Platelet degranulation"/>
</dbReference>
<dbReference type="Reactome" id="R-HSA-381426">
    <property type="pathway name" value="Regulation of Insulin-like Growth Factor (IGF) transport and uptake by Insulin-like Growth Factor Binding Proteins (IGFBPs)"/>
</dbReference>
<dbReference type="Reactome" id="R-HSA-8957275">
    <property type="pathway name" value="Post-translational protein phosphorylation"/>
</dbReference>
<dbReference type="SignaLink" id="Q06481"/>
<dbReference type="SIGNOR" id="Q06481"/>
<dbReference type="BioGRID-ORCS" id="334">
    <property type="hits" value="14 hits in 1162 CRISPR screens"/>
</dbReference>
<dbReference type="ChiTaRS" id="APLP2">
    <property type="organism name" value="human"/>
</dbReference>
<dbReference type="GeneWiki" id="APLP2"/>
<dbReference type="GenomeRNAi" id="334"/>
<dbReference type="Pharos" id="Q06481">
    <property type="development level" value="Tbio"/>
</dbReference>
<dbReference type="PRO" id="PR:Q06481"/>
<dbReference type="Proteomes" id="UP000005640">
    <property type="component" value="Chromosome 11"/>
</dbReference>
<dbReference type="RNAct" id="Q06481">
    <property type="molecule type" value="protein"/>
</dbReference>
<dbReference type="Bgee" id="ENSG00000084234">
    <property type="expression patterns" value="Expressed in renal medulla and 223 other cell types or tissues"/>
</dbReference>
<dbReference type="ExpressionAtlas" id="Q06481">
    <property type="expression patterns" value="baseline and differential"/>
</dbReference>
<dbReference type="GO" id="GO:0005788">
    <property type="term" value="C:endoplasmic reticulum lumen"/>
    <property type="evidence" value="ECO:0000304"/>
    <property type="project" value="Reactome"/>
</dbReference>
<dbReference type="GO" id="GO:0070062">
    <property type="term" value="C:extracellular exosome"/>
    <property type="evidence" value="ECO:0007005"/>
    <property type="project" value="UniProtKB"/>
</dbReference>
<dbReference type="GO" id="GO:0016020">
    <property type="term" value="C:membrane"/>
    <property type="evidence" value="ECO:0007005"/>
    <property type="project" value="UniProtKB"/>
</dbReference>
<dbReference type="GO" id="GO:0005634">
    <property type="term" value="C:nucleus"/>
    <property type="evidence" value="ECO:0000314"/>
    <property type="project" value="UniProtKB"/>
</dbReference>
<dbReference type="GO" id="GO:0005886">
    <property type="term" value="C:plasma membrane"/>
    <property type="evidence" value="ECO:0000304"/>
    <property type="project" value="Reactome"/>
</dbReference>
<dbReference type="GO" id="GO:0031092">
    <property type="term" value="C:platelet alpha granule membrane"/>
    <property type="evidence" value="ECO:0000304"/>
    <property type="project" value="Reactome"/>
</dbReference>
<dbReference type="GO" id="GO:0003677">
    <property type="term" value="F:DNA binding"/>
    <property type="evidence" value="ECO:0000303"/>
    <property type="project" value="UniProtKB"/>
</dbReference>
<dbReference type="GO" id="GO:0008201">
    <property type="term" value="F:heparin binding"/>
    <property type="evidence" value="ECO:0007669"/>
    <property type="project" value="InterPro"/>
</dbReference>
<dbReference type="GO" id="GO:0042802">
    <property type="term" value="F:identical protein binding"/>
    <property type="evidence" value="ECO:0000353"/>
    <property type="project" value="IntAct"/>
</dbReference>
<dbReference type="GO" id="GO:0004867">
    <property type="term" value="F:serine-type endopeptidase inhibitor activity"/>
    <property type="evidence" value="ECO:0000314"/>
    <property type="project" value="UniProtKB"/>
</dbReference>
<dbReference type="GO" id="GO:0046914">
    <property type="term" value="F:transition metal ion binding"/>
    <property type="evidence" value="ECO:0007669"/>
    <property type="project" value="InterPro"/>
</dbReference>
<dbReference type="GO" id="GO:0007409">
    <property type="term" value="P:axonogenesis"/>
    <property type="evidence" value="ECO:0000318"/>
    <property type="project" value="GO_Central"/>
</dbReference>
<dbReference type="GO" id="GO:0007417">
    <property type="term" value="P:central nervous system development"/>
    <property type="evidence" value="ECO:0000318"/>
    <property type="project" value="GO_Central"/>
</dbReference>
<dbReference type="GO" id="GO:0007186">
    <property type="term" value="P:G protein-coupled receptor signaling pathway"/>
    <property type="evidence" value="ECO:0000303"/>
    <property type="project" value="UniProtKB"/>
</dbReference>
<dbReference type="CDD" id="cd21709">
    <property type="entry name" value="JMTM_APLP2"/>
    <property type="match status" value="1"/>
</dbReference>
<dbReference type="CDD" id="cd22607">
    <property type="entry name" value="Kunitz_ABPP-like"/>
    <property type="match status" value="1"/>
</dbReference>
<dbReference type="FunFam" id="3.30.1490.140:FF:000001">
    <property type="entry name" value="Amyloid beta (A4) protein b"/>
    <property type="match status" value="1"/>
</dbReference>
<dbReference type="FunFam" id="1.20.120.770:FF:000001">
    <property type="entry name" value="Amyloid beta A4 protein-like isoform 1"/>
    <property type="match status" value="1"/>
</dbReference>
<dbReference type="FunFam" id="4.10.410.10:FF:000003">
    <property type="entry name" value="amyloid-like protein 2 isoform X1"/>
    <property type="match status" value="1"/>
</dbReference>
<dbReference type="Gene3D" id="6.10.250.1670">
    <property type="match status" value="1"/>
</dbReference>
<dbReference type="Gene3D" id="1.20.120.770">
    <property type="entry name" value="Amyloid precursor protein, E2 domain"/>
    <property type="match status" value="1"/>
</dbReference>
<dbReference type="Gene3D" id="3.30.1490.140">
    <property type="entry name" value="Amyloidogenic glycoprotein, copper-binding domain"/>
    <property type="match status" value="1"/>
</dbReference>
<dbReference type="Gene3D" id="3.90.570.10">
    <property type="entry name" value="Amyloidogenic glycoprotein, heparin-binding domain"/>
    <property type="match status" value="1"/>
</dbReference>
<dbReference type="Gene3D" id="4.10.410.10">
    <property type="entry name" value="Pancreatic trypsin inhibitor Kunitz domain"/>
    <property type="match status" value="1"/>
</dbReference>
<dbReference type="Gene3D" id="2.30.29.30">
    <property type="entry name" value="Pleckstrin-homology domain (PH domain)/Phosphotyrosine-binding domain (PTB)"/>
    <property type="match status" value="1"/>
</dbReference>
<dbReference type="InterPro" id="IPR036669">
    <property type="entry name" value="Amyloid_Cu-bd_sf"/>
</dbReference>
<dbReference type="InterPro" id="IPR008155">
    <property type="entry name" value="Amyloid_glyco"/>
</dbReference>
<dbReference type="InterPro" id="IPR011178">
    <property type="entry name" value="Amyloid_glyco_Cu-bd"/>
</dbReference>
<dbReference type="InterPro" id="IPR024329">
    <property type="entry name" value="Amyloid_glyco_E2_domain"/>
</dbReference>
<dbReference type="InterPro" id="IPR008154">
    <property type="entry name" value="Amyloid_glyco_extra"/>
</dbReference>
<dbReference type="InterPro" id="IPR015849">
    <property type="entry name" value="Amyloid_glyco_heparin-bd"/>
</dbReference>
<dbReference type="InterPro" id="IPR036454">
    <property type="entry name" value="Amyloid_glyco_heparin-bd_sf"/>
</dbReference>
<dbReference type="InterPro" id="IPR019745">
    <property type="entry name" value="Amyloid_glyco_intracell_CS"/>
</dbReference>
<dbReference type="InterPro" id="IPR019543">
    <property type="entry name" value="APP_amyloid_C"/>
</dbReference>
<dbReference type="InterPro" id="IPR019744">
    <property type="entry name" value="APP_CUBD_CS"/>
</dbReference>
<dbReference type="InterPro" id="IPR036176">
    <property type="entry name" value="E2_sf"/>
</dbReference>
<dbReference type="InterPro" id="IPR002223">
    <property type="entry name" value="Kunitz_BPTI"/>
</dbReference>
<dbReference type="InterPro" id="IPR036880">
    <property type="entry name" value="Kunitz_BPTI_sf"/>
</dbReference>
<dbReference type="InterPro" id="IPR011993">
    <property type="entry name" value="PH-like_dom_sf"/>
</dbReference>
<dbReference type="InterPro" id="IPR020901">
    <property type="entry name" value="Prtase_inh_Kunz-CS"/>
</dbReference>
<dbReference type="PANTHER" id="PTHR23103">
    <property type="entry name" value="ALZHEIMER'S DISEASE BETA-AMYLOID RELATED"/>
    <property type="match status" value="1"/>
</dbReference>
<dbReference type="PANTHER" id="PTHR23103:SF14">
    <property type="entry name" value="AMYLOID BETA PRECURSOR LIKE PROTEIN 2"/>
    <property type="match status" value="1"/>
</dbReference>
<dbReference type="Pfam" id="PF10515">
    <property type="entry name" value="APP_amyloid"/>
    <property type="match status" value="1"/>
</dbReference>
<dbReference type="Pfam" id="PF12924">
    <property type="entry name" value="APP_Cu_bd"/>
    <property type="match status" value="1"/>
</dbReference>
<dbReference type="Pfam" id="PF12925">
    <property type="entry name" value="APP_E2"/>
    <property type="match status" value="1"/>
</dbReference>
<dbReference type="Pfam" id="PF02177">
    <property type="entry name" value="APP_N"/>
    <property type="match status" value="1"/>
</dbReference>
<dbReference type="Pfam" id="PF00014">
    <property type="entry name" value="Kunitz_BPTI"/>
    <property type="match status" value="1"/>
</dbReference>
<dbReference type="PRINTS" id="PR00203">
    <property type="entry name" value="AMYLOIDA4"/>
</dbReference>
<dbReference type="PRINTS" id="PR00759">
    <property type="entry name" value="BASICPTASE"/>
</dbReference>
<dbReference type="SMART" id="SM00006">
    <property type="entry name" value="A4_EXTRA"/>
    <property type="match status" value="1"/>
</dbReference>
<dbReference type="SMART" id="SM00131">
    <property type="entry name" value="KU"/>
    <property type="match status" value="1"/>
</dbReference>
<dbReference type="SUPFAM" id="SSF56491">
    <property type="entry name" value="A heparin-binding domain"/>
    <property type="match status" value="1"/>
</dbReference>
<dbReference type="SUPFAM" id="SSF89811">
    <property type="entry name" value="Amyloid beta a4 protein copper binding domain (domain 2)"/>
    <property type="match status" value="1"/>
</dbReference>
<dbReference type="SUPFAM" id="SSF57362">
    <property type="entry name" value="BPTI-like"/>
    <property type="match status" value="1"/>
</dbReference>
<dbReference type="SUPFAM" id="SSF109843">
    <property type="entry name" value="CAPPD, an extracellular domain of amyloid beta A4 protein"/>
    <property type="match status" value="1"/>
</dbReference>
<dbReference type="PROSITE" id="PS00319">
    <property type="entry name" value="APP_CUBD"/>
    <property type="match status" value="1"/>
</dbReference>
<dbReference type="PROSITE" id="PS51869">
    <property type="entry name" value="APP_E1"/>
    <property type="match status" value="1"/>
</dbReference>
<dbReference type="PROSITE" id="PS51870">
    <property type="entry name" value="APP_E2"/>
    <property type="match status" value="1"/>
</dbReference>
<dbReference type="PROSITE" id="PS00320">
    <property type="entry name" value="APP_INTRA"/>
    <property type="match status" value="1"/>
</dbReference>
<dbReference type="PROSITE" id="PS00280">
    <property type="entry name" value="BPTI_KUNITZ_1"/>
    <property type="match status" value="1"/>
</dbReference>
<dbReference type="PROSITE" id="PS50279">
    <property type="entry name" value="BPTI_KUNITZ_2"/>
    <property type="match status" value="1"/>
</dbReference>
<feature type="signal peptide" evidence="4">
    <location>
        <begin position="1"/>
        <end position="31"/>
    </location>
</feature>
<feature type="chain" id="PRO_0000000207" description="Amyloid beta precursor like protein 2">
    <location>
        <begin position="32"/>
        <end position="763"/>
    </location>
</feature>
<feature type="topological domain" description="Extracellular" evidence="4">
    <location>
        <begin position="32"/>
        <end position="692"/>
    </location>
</feature>
<feature type="transmembrane region" description="Helical" evidence="4">
    <location>
        <begin position="693"/>
        <end position="716"/>
    </location>
</feature>
<feature type="topological domain" description="Cytoplasmic" evidence="4">
    <location>
        <begin position="717"/>
        <end position="763"/>
    </location>
</feature>
<feature type="domain" description="E1" evidence="6">
    <location>
        <begin position="46"/>
        <end position="205"/>
    </location>
</feature>
<feature type="domain" description="BPTI/Kunitz inhibitor" evidence="5">
    <location>
        <begin position="306"/>
        <end position="364"/>
    </location>
</feature>
<feature type="domain" description="E2" evidence="7">
    <location>
        <begin position="373"/>
        <end position="564"/>
    </location>
</feature>
<feature type="region of interest" description="GFLD subdomain" evidence="6">
    <location>
        <begin position="46"/>
        <end position="139"/>
    </location>
</feature>
<feature type="region of interest" description="CuBD subdomain" evidence="6">
    <location>
        <begin position="147"/>
        <end position="205"/>
    </location>
</feature>
<feature type="region of interest" description="Disordered" evidence="8">
    <location>
        <begin position="211"/>
        <end position="299"/>
    </location>
</feature>
<feature type="region of interest" description="Interaction with DAB2" evidence="1">
    <location>
        <begin position="749"/>
        <end position="763"/>
    </location>
</feature>
<feature type="short sequence motif" description="NPXY motif">
    <location>
        <begin position="750"/>
        <end position="755"/>
    </location>
</feature>
<feature type="compositionally biased region" description="Acidic residues" evidence="8">
    <location>
        <begin position="215"/>
        <end position="233"/>
    </location>
</feature>
<feature type="compositionally biased region" description="Acidic residues" evidence="8">
    <location>
        <begin position="242"/>
        <end position="269"/>
    </location>
</feature>
<feature type="compositionally biased region" description="Basic and acidic residues" evidence="8">
    <location>
        <begin position="270"/>
        <end position="282"/>
    </location>
</feature>
<feature type="binding site" evidence="6">
    <location>
        <position position="163"/>
    </location>
    <ligand>
        <name>Cu cation</name>
        <dbReference type="ChEBI" id="CHEBI:23378"/>
    </ligand>
</feature>
<feature type="binding site" evidence="6">
    <location>
        <position position="167"/>
    </location>
    <ligand>
        <name>Cu cation</name>
        <dbReference type="ChEBI" id="CHEBI:23378"/>
    </ligand>
</feature>
<feature type="binding site" evidence="6">
    <location>
        <position position="184"/>
    </location>
    <ligand>
        <name>Cu cation</name>
        <dbReference type="ChEBI" id="CHEBI:23378"/>
    </ligand>
</feature>
<feature type="site" description="Required for Cu(2+) reduction" evidence="6">
    <location>
        <position position="186"/>
    </location>
</feature>
<feature type="site" description="Reactive bond" evidence="1">
    <location>
        <begin position="320"/>
        <end position="321"/>
    </location>
</feature>
<feature type="modified residue" description="Phosphoserine; by FAM20C" evidence="10">
    <location>
        <position position="590"/>
    </location>
</feature>
<feature type="glycosylation site" description="O-linked (Xyl...) (chondroitin sulfate) serine" evidence="11">
    <location>
        <position position="626"/>
    </location>
</feature>
<feature type="disulfide bond" evidence="6">
    <location>
        <begin position="56"/>
        <end position="80"/>
    </location>
</feature>
<feature type="disulfide bond" evidence="6">
    <location>
        <begin position="91"/>
        <end position="133"/>
    </location>
</feature>
<feature type="disulfide bond" evidence="6">
    <location>
        <begin position="116"/>
        <end position="123"/>
    </location>
</feature>
<feature type="disulfide bond" evidence="6">
    <location>
        <begin position="149"/>
        <end position="203"/>
    </location>
</feature>
<feature type="disulfide bond" evidence="6">
    <location>
        <begin position="160"/>
        <end position="190"/>
    </location>
</feature>
<feature type="disulfide bond" evidence="6">
    <location>
        <begin position="174"/>
        <end position="202"/>
    </location>
</feature>
<feature type="disulfide bond" evidence="5">
    <location>
        <begin position="310"/>
        <end position="360"/>
    </location>
</feature>
<feature type="disulfide bond" evidence="5">
    <location>
        <begin position="319"/>
        <end position="343"/>
    </location>
</feature>
<feature type="disulfide bond" evidence="5">
    <location>
        <begin position="335"/>
        <end position="356"/>
    </location>
</feature>
<feature type="splice variant" id="VSP_046881" description="In isoform 6." evidence="17">
    <original>MAATGTAAAAATGRLLLLLLVGLTAPALALAGYIE</original>
    <variation>MLRAPGELPRQAARCSLCRLGPGRGRAFFKWRCLPASVDRGNPLW</variation>
    <location>
        <begin position="1"/>
        <end position="35"/>
    </location>
</feature>
<feature type="splice variant" id="VSP_030921" description="In isoform 5." evidence="15">
    <location>
        <begin position="136"/>
        <end position="364"/>
    </location>
</feature>
<feature type="splice variant" id="VSP_000018" description="In isoform 2 and isoform 4." evidence="16">
    <location>
        <begin position="308"/>
        <end position="363"/>
    </location>
</feature>
<feature type="splice variant" id="VSP_046882" description="In isoform 4." evidence="16">
    <original>I</original>
    <variation>V</variation>
    <location>
        <position position="364"/>
    </location>
</feature>
<feature type="splice variant" id="VSP_000019" description="In isoform 3, isoform 4, isoform 5 and isoform 6." evidence="14 15 16">
    <location>
        <begin position="613"/>
        <end position="624"/>
    </location>
</feature>
<feature type="sequence variant" id="VAR_022039" description="In dbSNP:rs3740881.">
    <original>D</original>
    <variation>N</variation>
    <location>
        <position position="632"/>
    </location>
</feature>
<feature type="sequence conflict" description="In Ref. 5; AAD47291." evidence="17" ref="5">
    <original>E</original>
    <variation>D</variation>
    <location>
        <position position="224"/>
    </location>
</feature>
<feature type="sequence conflict" description="In Ref. 4; BAG54641." evidence="17" ref="4">
    <location>
        <begin position="226"/>
        <end position="227"/>
    </location>
</feature>
<feature type="sequence conflict" description="In Ref. 1; AAA35526." evidence="17" ref="1">
    <original>S</original>
    <variation>I</variation>
    <location>
        <position position="543"/>
    </location>
</feature>
<feature type="sequence conflict" description="In Ref. 8; AAH04371." evidence="17" ref="8">
    <original>S</original>
    <variation>T</variation>
    <location>
        <position position="543"/>
    </location>
</feature>
<feature type="strand" evidence="19">
    <location>
        <begin position="325"/>
        <end position="329"/>
    </location>
</feature>
<feature type="turn" evidence="19">
    <location>
        <begin position="330"/>
        <end position="333"/>
    </location>
</feature>
<feature type="strand" evidence="19">
    <location>
        <begin position="334"/>
        <end position="338"/>
    </location>
</feature>
<feature type="helix" evidence="19">
    <location>
        <begin position="345"/>
        <end position="347"/>
    </location>
</feature>
<feature type="helix" evidence="19">
    <location>
        <begin position="353"/>
        <end position="359"/>
    </location>
</feature>
<feature type="helix" evidence="20">
    <location>
        <begin position="374"/>
        <end position="377"/>
    </location>
</feature>
<feature type="helix" evidence="20">
    <location>
        <begin position="386"/>
        <end position="417"/>
    </location>
</feature>
<feature type="turn" evidence="20">
    <location>
        <begin position="418"/>
        <end position="421"/>
    </location>
</feature>
<feature type="helix" evidence="20">
    <location>
        <begin position="424"/>
        <end position="480"/>
    </location>
</feature>
<feature type="strand" evidence="20">
    <location>
        <begin position="481"/>
        <end position="483"/>
    </location>
</feature>
<feature type="helix" evidence="20">
    <location>
        <begin position="486"/>
        <end position="517"/>
    </location>
</feature>
<feature type="helix" evidence="20">
    <location>
        <begin position="519"/>
        <end position="545"/>
    </location>
</feature>
<feature type="helix" evidence="20">
    <location>
        <begin position="546"/>
        <end position="549"/>
    </location>
</feature>
<feature type="helix" evidence="20">
    <location>
        <begin position="551"/>
        <end position="556"/>
    </location>
</feature>
<feature type="helix" evidence="20">
    <location>
        <begin position="558"/>
        <end position="566"/>
    </location>
</feature>
<reference key="1">
    <citation type="journal article" date="1993" name="Biochemistry">
        <title>Molecular cloning of the cDNA for a human amyloid precursor protein homolog: evidence for a multigene family.</title>
        <authorList>
            <person name="Sprecher C.A."/>
            <person name="Grant F.J."/>
            <person name="Grimm G."/>
            <person name="O'Hara P.J."/>
            <person name="Norris F."/>
            <person name="Norris K."/>
            <person name="Foster D.C."/>
        </authorList>
    </citation>
    <scope>NUCLEOTIDE SEQUENCE [MRNA] (ISOFORM 1)</scope>
    <source>
        <tissue>Placenta</tissue>
    </source>
</reference>
<reference key="2">
    <citation type="journal article" date="1993" name="Nat. Genet.">
        <title>Isolation and characterization of APLP2 encoding a homologue of the Alzheimer's associated amyloid beta protein precursor.</title>
        <authorList>
            <person name="Wasco W."/>
            <person name="Gurubhagavatula S."/>
            <person name="Paradis M."/>
            <person name="Romano D.M."/>
            <person name="Sisodia S.S."/>
            <person name="Hyman B.T."/>
            <person name="Neve R.L."/>
            <person name="Tanzi R.E."/>
        </authorList>
    </citation>
    <scope>NUCLEOTIDE SEQUENCE [MRNA] (ISOFORM 1)</scope>
    <source>
        <tissue>Brain</tissue>
    </source>
</reference>
<reference key="3">
    <citation type="journal article" date="1994" name="DNA Cell Biol.">
        <title>A human amyloid precursor-like protein is highly homologous to a mouse sequence-specific DNA-binding protein.</title>
        <authorList>
            <person name="von der Kammer H."/>
            <person name="Hanes J."/>
            <person name="Klaudiny J."/>
            <person name="Scheit K.H."/>
        </authorList>
    </citation>
    <scope>NUCLEOTIDE SEQUENCE [MRNA] (ISOFORM 1)</scope>
    <source>
        <tissue>Ovary</tissue>
    </source>
</reference>
<reference key="4">
    <citation type="journal article" date="2004" name="Nat. Genet.">
        <title>Complete sequencing and characterization of 21,243 full-length human cDNAs.</title>
        <authorList>
            <person name="Ota T."/>
            <person name="Suzuki Y."/>
            <person name="Nishikawa T."/>
            <person name="Otsuki T."/>
            <person name="Sugiyama T."/>
            <person name="Irie R."/>
            <person name="Wakamatsu A."/>
            <person name="Hayashi K."/>
            <person name="Sato H."/>
            <person name="Nagai K."/>
            <person name="Kimura K."/>
            <person name="Makita H."/>
            <person name="Sekine M."/>
            <person name="Obayashi M."/>
            <person name="Nishi T."/>
            <person name="Shibahara T."/>
            <person name="Tanaka T."/>
            <person name="Ishii S."/>
            <person name="Yamamoto J."/>
            <person name="Saito K."/>
            <person name="Kawai Y."/>
            <person name="Isono Y."/>
            <person name="Nakamura Y."/>
            <person name="Nagahari K."/>
            <person name="Murakami K."/>
            <person name="Yasuda T."/>
            <person name="Iwayanagi T."/>
            <person name="Wagatsuma M."/>
            <person name="Shiratori A."/>
            <person name="Sudo H."/>
            <person name="Hosoiri T."/>
            <person name="Kaku Y."/>
            <person name="Kodaira H."/>
            <person name="Kondo H."/>
            <person name="Sugawara M."/>
            <person name="Takahashi M."/>
            <person name="Kanda K."/>
            <person name="Yokoi T."/>
            <person name="Furuya T."/>
            <person name="Kikkawa E."/>
            <person name="Omura Y."/>
            <person name="Abe K."/>
            <person name="Kamihara K."/>
            <person name="Katsuta N."/>
            <person name="Sato K."/>
            <person name="Tanikawa M."/>
            <person name="Yamazaki M."/>
            <person name="Ninomiya K."/>
            <person name="Ishibashi T."/>
            <person name="Yamashita H."/>
            <person name="Murakawa K."/>
            <person name="Fujimori K."/>
            <person name="Tanai H."/>
            <person name="Kimata M."/>
            <person name="Watanabe M."/>
            <person name="Hiraoka S."/>
            <person name="Chiba Y."/>
            <person name="Ishida S."/>
            <person name="Ono Y."/>
            <person name="Takiguchi S."/>
            <person name="Watanabe S."/>
            <person name="Yosida M."/>
            <person name="Hotuta T."/>
            <person name="Kusano J."/>
            <person name="Kanehori K."/>
            <person name="Takahashi-Fujii A."/>
            <person name="Hara H."/>
            <person name="Tanase T.-O."/>
            <person name="Nomura Y."/>
            <person name="Togiya S."/>
            <person name="Komai F."/>
            <person name="Hara R."/>
            <person name="Takeuchi K."/>
            <person name="Arita M."/>
            <person name="Imose N."/>
            <person name="Musashino K."/>
            <person name="Yuuki H."/>
            <person name="Oshima A."/>
            <person name="Sasaki N."/>
            <person name="Aotsuka S."/>
            <person name="Yoshikawa Y."/>
            <person name="Matsunawa H."/>
            <person name="Ichihara T."/>
            <person name="Shiohata N."/>
            <person name="Sano S."/>
            <person name="Moriya S."/>
            <person name="Momiyama H."/>
            <person name="Satoh N."/>
            <person name="Takami S."/>
            <person name="Terashima Y."/>
            <person name="Suzuki O."/>
            <person name="Nakagawa S."/>
            <person name="Senoh A."/>
            <person name="Mizoguchi H."/>
            <person name="Goto Y."/>
            <person name="Shimizu F."/>
            <person name="Wakebe H."/>
            <person name="Hishigaki H."/>
            <person name="Watanabe T."/>
            <person name="Sugiyama A."/>
            <person name="Takemoto M."/>
            <person name="Kawakami B."/>
            <person name="Yamazaki M."/>
            <person name="Watanabe K."/>
            <person name="Kumagai A."/>
            <person name="Itakura S."/>
            <person name="Fukuzumi Y."/>
            <person name="Fujimori Y."/>
            <person name="Komiyama M."/>
            <person name="Tashiro H."/>
            <person name="Tanigami A."/>
            <person name="Fujiwara T."/>
            <person name="Ono T."/>
            <person name="Yamada K."/>
            <person name="Fujii Y."/>
            <person name="Ozaki K."/>
            <person name="Hirao M."/>
            <person name="Ohmori Y."/>
            <person name="Kawabata A."/>
            <person name="Hikiji T."/>
            <person name="Kobatake N."/>
            <person name="Inagaki H."/>
            <person name="Ikema Y."/>
            <person name="Okamoto S."/>
            <person name="Okitani R."/>
            <person name="Kawakami T."/>
            <person name="Noguchi S."/>
            <person name="Itoh T."/>
            <person name="Shigeta K."/>
            <person name="Senba T."/>
            <person name="Matsumura K."/>
            <person name="Nakajima Y."/>
            <person name="Mizuno T."/>
            <person name="Morinaga M."/>
            <person name="Sasaki M."/>
            <person name="Togashi T."/>
            <person name="Oyama M."/>
            <person name="Hata H."/>
            <person name="Watanabe M."/>
            <person name="Komatsu T."/>
            <person name="Mizushima-Sugano J."/>
            <person name="Satoh T."/>
            <person name="Shirai Y."/>
            <person name="Takahashi Y."/>
            <person name="Nakagawa K."/>
            <person name="Okumura K."/>
            <person name="Nagase T."/>
            <person name="Nomura N."/>
            <person name="Kikuchi H."/>
            <person name="Masuho Y."/>
            <person name="Yamashita R."/>
            <person name="Nakai K."/>
            <person name="Yada T."/>
            <person name="Nakamura Y."/>
            <person name="Ohara O."/>
            <person name="Isogai T."/>
            <person name="Sugano S."/>
        </authorList>
    </citation>
    <scope>NUCLEOTIDE SEQUENCE [LARGE SCALE MRNA] (ISOFORM 3)</scope>
    <source>
        <tissue>Testis</tissue>
    </source>
</reference>
<reference key="5">
    <citation type="journal article" date="1995" name="Nucleic Acids Res.">
        <title>USF binds to the APB alpha sequence in the promoter of the amyloid beta-protein precursor gene.</title>
        <authorList>
            <person name="Vostrov A.A."/>
            <person name="Quitschke W.W."/>
            <person name="Vidal F."/>
            <person name="Schwarzman A.L."/>
            <person name="Goldgaber D."/>
        </authorList>
    </citation>
    <scope>NUCLEOTIDE SEQUENCE [MRNA] (ISOFORM 4)</scope>
    <scope>NUCLEOTIDE SEQUENCE [MRNA] OF 39-763 (ISOFORM 2)</scope>
    <scope>NUCLEOTIDE SEQUENCE [MRNA] OF 229-763 (ISOFORM 3)</scope>
    <source>
        <tissue>Brain</tissue>
    </source>
</reference>
<reference key="6">
    <citation type="journal article" date="2000" name="Mol. Hum. Reprod.">
        <title>Expression and characterization of the human YWK-II gene, encoding a sperm membrane protein related to the alzheimer betaA4-amyloid precursor protein.</title>
        <authorList>
            <person name="Huang P."/>
            <person name="Miao S."/>
            <person name="Fan H."/>
            <person name="Sheng Q."/>
            <person name="Yan Y."/>
            <person name="Wang L."/>
            <person name="Koide S.S."/>
        </authorList>
    </citation>
    <scope>NUCLEOTIDE SEQUENCE [MRNA] (ISOFORM 1)</scope>
    <source>
        <tissue>Testis</tissue>
    </source>
</reference>
<reference key="7">
    <citation type="journal article" date="2006" name="Nature">
        <title>Human chromosome 11 DNA sequence and analysis including novel gene identification.</title>
        <authorList>
            <person name="Taylor T.D."/>
            <person name="Noguchi H."/>
            <person name="Totoki Y."/>
            <person name="Toyoda A."/>
            <person name="Kuroki Y."/>
            <person name="Dewar K."/>
            <person name="Lloyd C."/>
            <person name="Itoh T."/>
            <person name="Takeda T."/>
            <person name="Kim D.-W."/>
            <person name="She X."/>
            <person name="Barlow K.F."/>
            <person name="Bloom T."/>
            <person name="Bruford E."/>
            <person name="Chang J.L."/>
            <person name="Cuomo C.A."/>
            <person name="Eichler E."/>
            <person name="FitzGerald M.G."/>
            <person name="Jaffe D.B."/>
            <person name="LaButti K."/>
            <person name="Nicol R."/>
            <person name="Park H.-S."/>
            <person name="Seaman C."/>
            <person name="Sougnez C."/>
            <person name="Yang X."/>
            <person name="Zimmer A.R."/>
            <person name="Zody M.C."/>
            <person name="Birren B.W."/>
            <person name="Nusbaum C."/>
            <person name="Fujiyama A."/>
            <person name="Hattori M."/>
            <person name="Rogers J."/>
            <person name="Lander E.S."/>
            <person name="Sakaki Y."/>
        </authorList>
    </citation>
    <scope>NUCLEOTIDE SEQUENCE [LARGE SCALE GENOMIC DNA]</scope>
</reference>
<reference key="8">
    <citation type="journal article" date="2004" name="Genome Res.">
        <title>The status, quality, and expansion of the NIH full-length cDNA project: the Mammalian Gene Collection (MGC).</title>
        <authorList>
            <consortium name="The MGC Project Team"/>
        </authorList>
    </citation>
    <scope>NUCLEOTIDE SEQUENCE [LARGE SCALE MRNA] (ISOFORMS 3 AND 5)</scope>
    <source>
        <tissue>Lung</tissue>
        <tissue>Pancreas</tissue>
    </source>
</reference>
<reference key="9">
    <citation type="journal article" date="1994" name="FEBS Lett.">
        <title>Expression, purification and characterization of a Kunitz-type protease inhibitor domain from human amyloid precursor protein homolog.</title>
        <authorList>
            <person name="Petersen L.C."/>
            <person name="Bjorn S.E."/>
            <person name="Norris F."/>
            <person name="Norris K."/>
            <person name="Sprecher C."/>
            <person name="Foster D.C."/>
        </authorList>
    </citation>
    <scope>NUCLEOTIDE SEQUENCE [GENOMIC DNA] OF 305-362 (ISOFORMS 1/3)</scope>
    <scope>FUNCTION</scope>
    <scope>GLYCOSYLATION</scope>
</reference>
<reference key="10">
    <citation type="journal article" date="1996" name="Proc. Natl. Acad. Sci. U.S.A.">
        <title>Association of a novel human FE65-like protein with the cytoplasmic domain of the amyloid-beta precursor protein.</title>
        <authorList>
            <person name="Guenette S.Y."/>
            <person name="Chen J."/>
            <person name="Jondro P.D."/>
            <person name="Tanzi R.E."/>
        </authorList>
    </citation>
    <scope>INTERACTION WITH APBB2</scope>
</reference>
<reference key="11">
    <citation type="journal article" date="1999" name="Neurosci. Lett.">
        <title>Molecular cloning of human Fe65L2 and its interaction with the Alzheimer's beta-amyloid precursor protein.</title>
        <authorList>
            <person name="Tanahashi H."/>
        </authorList>
    </citation>
    <scope>INTERACTION WITH APBB3</scope>
</reference>
<reference key="12">
    <citation type="journal article" date="2011" name="BMC Syst. Biol.">
        <title>Initial characterization of the human central proteome.</title>
        <authorList>
            <person name="Burkard T.R."/>
            <person name="Planyavsky M."/>
            <person name="Kaupe I."/>
            <person name="Breitwieser F.P."/>
            <person name="Buerckstuemmer T."/>
            <person name="Bennett K.L."/>
            <person name="Superti-Furga G."/>
            <person name="Colinge J."/>
        </authorList>
    </citation>
    <scope>IDENTIFICATION BY MASS SPECTROMETRY [LARGE SCALE ANALYSIS]</scope>
</reference>
<reference key="13">
    <citation type="journal article" date="2015" name="Cell">
        <title>A single kinase generates the majority of the secreted phosphoproteome.</title>
        <authorList>
            <person name="Tagliabracci V.S."/>
            <person name="Wiley S.E."/>
            <person name="Guo X."/>
            <person name="Kinch L.N."/>
            <person name="Durrant E."/>
            <person name="Wen J."/>
            <person name="Xiao J."/>
            <person name="Cui J."/>
            <person name="Nguyen K.B."/>
            <person name="Engel J.L."/>
            <person name="Coon J.J."/>
            <person name="Grishin N."/>
            <person name="Pinna L.A."/>
            <person name="Pagliarini D.J."/>
            <person name="Dixon J.E."/>
        </authorList>
    </citation>
    <scope>PHOSPHORYLATION AT SER-590</scope>
</reference>
<reference key="14">
    <citation type="journal article" date="2015" name="Proteomics">
        <title>N-terminome analysis of the human mitochondrial proteome.</title>
        <authorList>
            <person name="Vaca Jacome A.S."/>
            <person name="Rabilloud T."/>
            <person name="Schaeffer-Reiss C."/>
            <person name="Rompais M."/>
            <person name="Ayoub D."/>
            <person name="Lane L."/>
            <person name="Bairoch A."/>
            <person name="Van Dorsselaer A."/>
            <person name="Carapito C."/>
        </authorList>
    </citation>
    <scope>IDENTIFICATION BY MASS SPECTROMETRY [LARGE SCALE ANALYSIS]</scope>
</reference>
<reference key="15">
    <citation type="journal article" date="2020" name="Glycobiology">
        <title>An affinity chromatography and glycoproteomics workflow to profile the chondroitin sulfate proteoglycans that interact with malarial VAR2CSA in the placenta and in cancer.</title>
        <authorList>
            <person name="Toledo A.G."/>
            <person name="Pihl J."/>
            <person name="Spliid C.B."/>
            <person name="Persson A."/>
            <person name="Nilsson J."/>
            <person name="Pereira M.A."/>
            <person name="Gustavsson T."/>
            <person name="Choudhary S."/>
            <person name="Oo H.Z."/>
            <person name="Black P.C."/>
            <person name="Daugaard M."/>
            <person name="Esko J.D."/>
            <person name="Larson G."/>
            <person name="Salanti A."/>
            <person name="Clausen T.M."/>
        </authorList>
    </citation>
    <scope>GLYCOSYLATION AT SER-626</scope>
</reference>
<evidence type="ECO:0000250" key="1"/>
<evidence type="ECO:0000250" key="2">
    <source>
        <dbReference type="UniProtKB" id="P15943"/>
    </source>
</evidence>
<evidence type="ECO:0000250" key="3">
    <source>
        <dbReference type="UniProtKB" id="Q06335"/>
    </source>
</evidence>
<evidence type="ECO:0000255" key="4"/>
<evidence type="ECO:0000255" key="5">
    <source>
        <dbReference type="PROSITE-ProRule" id="PRU00031"/>
    </source>
</evidence>
<evidence type="ECO:0000255" key="6">
    <source>
        <dbReference type="PROSITE-ProRule" id="PRU01217"/>
    </source>
</evidence>
<evidence type="ECO:0000255" key="7">
    <source>
        <dbReference type="PROSITE-ProRule" id="PRU01218"/>
    </source>
</evidence>
<evidence type="ECO:0000256" key="8">
    <source>
        <dbReference type="SAM" id="MobiDB-lite"/>
    </source>
</evidence>
<evidence type="ECO:0000269" key="9">
    <source>
    </source>
</evidence>
<evidence type="ECO:0000269" key="10">
    <source>
    </source>
</evidence>
<evidence type="ECO:0000269" key="11">
    <source>
    </source>
</evidence>
<evidence type="ECO:0000269" key="12">
    <source>
    </source>
</evidence>
<evidence type="ECO:0000269" key="13">
    <source>
    </source>
</evidence>
<evidence type="ECO:0000303" key="14">
    <source>
    </source>
</evidence>
<evidence type="ECO:0000303" key="15">
    <source>
    </source>
</evidence>
<evidence type="ECO:0000303" key="16">
    <source>
    </source>
</evidence>
<evidence type="ECO:0000305" key="17"/>
<evidence type="ECO:0000312" key="18">
    <source>
        <dbReference type="HGNC" id="HGNC:598"/>
    </source>
</evidence>
<evidence type="ECO:0007829" key="19">
    <source>
        <dbReference type="PDB" id="5JBT"/>
    </source>
</evidence>
<evidence type="ECO:0007829" key="20">
    <source>
        <dbReference type="PDB" id="5TPT"/>
    </source>
</evidence>
<protein>
    <recommendedName>
        <fullName evidence="18">Amyloid beta precursor like protein 2</fullName>
    </recommendedName>
    <alternativeName>
        <fullName>APPH</fullName>
    </alternativeName>
    <alternativeName>
        <fullName evidence="3">Amyloid beta (A4) precursor-like protein 2</fullName>
    </alternativeName>
    <alternativeName>
        <fullName evidence="17">Amyloid protein homolog</fullName>
    </alternativeName>
    <alternativeName>
        <fullName evidence="2">Amyloid-like protein 2</fullName>
        <shortName>APLP-2</shortName>
    </alternativeName>
    <alternativeName>
        <fullName>CDEI box-binding protein</fullName>
        <shortName>CDEBP</shortName>
    </alternativeName>
    <alternativeName>
        <fullName evidence="2">Sperm membrane protein YWK-II</fullName>
    </alternativeName>
</protein>
<gene>
    <name evidence="18" type="primary">APLP2</name>
    <name evidence="18" type="synonym">APPL2</name>
</gene>
<name>APLP2_HUMAN</name>
<accession>Q06481</accession>
<accession>B3KXX9</accession>
<accession>H7BXI4</accession>
<accession>Q13861</accession>
<accession>Q14594</accession>
<accession>Q14662</accession>
<accession>Q71U10</accession>
<accession>Q7M4L3</accession>
<accession>Q9BT36</accession>
<proteinExistence type="evidence at protein level"/>
<keyword id="KW-0002">3D-structure</keyword>
<keyword id="KW-0025">Alternative splicing</keyword>
<keyword id="KW-1003">Cell membrane</keyword>
<keyword id="KW-0186">Copper</keyword>
<keyword id="KW-1015">Disulfide bond</keyword>
<keyword id="KW-0238">DNA-binding</keyword>
<keyword id="KW-0325">Glycoprotein</keyword>
<keyword id="KW-0472">Membrane</keyword>
<keyword id="KW-0479">Metal-binding</keyword>
<keyword id="KW-0539">Nucleus</keyword>
<keyword id="KW-0597">Phosphoprotein</keyword>
<keyword id="KW-0646">Protease inhibitor</keyword>
<keyword id="KW-0654">Proteoglycan</keyword>
<keyword id="KW-1267">Proteomics identification</keyword>
<keyword id="KW-1185">Reference proteome</keyword>
<keyword id="KW-0722">Serine protease inhibitor</keyword>
<keyword id="KW-0732">Signal</keyword>
<keyword id="KW-0812">Transmembrane</keyword>
<keyword id="KW-1133">Transmembrane helix</keyword>
<comment type="function">
    <text evidence="1 12">May play a role in the regulation of hemostasis. The soluble form may have inhibitory properties towards coagulation factors. May interact with cellular G-protein signaling pathways. May bind to the DNA 5'-GTCACATG-3'(CDEI box). Inhibits trypsin, chymotrypsin, plasmin, factor XIA and plasma and glandular kallikrein. Modulates the Cu/Zn nitric oxide-catalyzed autodegradation of GPC1 heparan sulfate side chains in fibroblasts (By similarity).</text>
</comment>
<comment type="subunit">
    <text evidence="1 9 13">Interacts with CPEB1. Interacts (via NPXY motif) with DAB2 (via PID domain); the interaction is impaired by tyrosine phosphorylation of the NPXY motif (By similarity). Interacts (via cytoplasmic domain) with APBB2/FE65L (PubMed:8855266). Interacts (via intracellular domain) with APBB3/FE65L2 (PubMed:10081969).</text>
</comment>
<comment type="interaction">
    <interactant intactId="EBI-79306">
        <id>Q06481</id>
    </interactant>
    <interactant intactId="EBI-6115839">
        <id>O96018</id>
        <label>APBA3</label>
    </interactant>
    <organismsDiffer>false</organismsDiffer>
    <experiments>4</experiments>
</comment>
<comment type="interaction">
    <interactant intactId="EBI-79306">
        <id>Q06481</id>
    </interactant>
    <interactant intactId="EBI-81694">
        <id>O00213</id>
        <label>APBB1</label>
    </interactant>
    <organismsDiffer>false</organismsDiffer>
    <experiments>3</experiments>
</comment>
<comment type="interaction">
    <interactant intactId="EBI-79306">
        <id>Q06481</id>
    </interactant>
    <interactant intactId="EBI-79277">
        <id>Q92870</id>
        <label>APBB2</label>
    </interactant>
    <organismsDiffer>false</organismsDiffer>
    <experiments>3</experiments>
</comment>
<comment type="interaction">
    <interactant intactId="EBI-79306">
        <id>Q06481</id>
    </interactant>
    <interactant intactId="EBI-286427">
        <id>O95704</id>
        <label>APBB3</label>
    </interactant>
    <organismsDiffer>false</organismsDiffer>
    <experiments>3</experiments>
</comment>
<comment type="interaction">
    <interactant intactId="EBI-79306">
        <id>Q06481</id>
    </interactant>
    <interactant intactId="EBI-74648">
        <id>P51693</id>
        <label>APLP1</label>
    </interactant>
    <organismsDiffer>false</organismsDiffer>
    <experiments>2</experiments>
</comment>
<comment type="interaction">
    <interactant intactId="EBI-79306">
        <id>Q06481</id>
    </interactant>
    <interactant intactId="EBI-79306">
        <id>Q06481</id>
        <label>APLP2</label>
    </interactant>
    <organismsDiffer>false</organismsDiffer>
    <experiments>3</experiments>
</comment>
<comment type="interaction">
    <interactant intactId="EBI-79306">
        <id>Q06481</id>
    </interactant>
    <interactant intactId="EBI-302641">
        <id>P05067-4</id>
        <label>APP</label>
    </interactant>
    <organismsDiffer>false</organismsDiffer>
    <experiments>2</experiments>
</comment>
<comment type="interaction">
    <interactant intactId="EBI-79306">
        <id>Q06481</id>
    </interactant>
    <interactant intactId="EBI-1038838">
        <id>Q13936</id>
        <label>CACNA1C</label>
    </interactant>
    <organismsDiffer>false</organismsDiffer>
    <experiments>5</experiments>
</comment>
<comment type="interaction">
    <interactant intactId="EBI-79306">
        <id>Q06481</id>
    </interactant>
    <interactant intactId="EBI-1043164">
        <id>O75618</id>
        <label>DEDD</label>
    </interactant>
    <organismsDiffer>false</organismsDiffer>
    <experiments>3</experiments>
</comment>
<comment type="interaction">
    <interactant intactId="EBI-79306">
        <id>Q06481</id>
    </interactant>
    <interactant intactId="EBI-913209">
        <id>P14921</id>
        <label>ETS1</label>
    </interactant>
    <organismsDiffer>false</organismsDiffer>
    <experiments>2</experiments>
</comment>
<comment type="interaction">
    <interactant intactId="EBI-79306">
        <id>Q06481</id>
    </interactant>
    <interactant intactId="EBI-2866431">
        <id>Q9Y287</id>
        <label>ITM2B</label>
    </interactant>
    <organismsDiffer>false</organismsDiffer>
    <experiments>2</experiments>
</comment>
<comment type="interaction">
    <interactant intactId="EBI-79306">
        <id>Q06481</id>
    </interactant>
    <interactant intactId="EBI-852823">
        <id>P05412</id>
        <label>JUN</label>
    </interactant>
    <organismsDiffer>false</organismsDiffer>
    <experiments>3</experiments>
</comment>
<comment type="interaction">
    <interactant intactId="EBI-79306">
        <id>Q06481</id>
    </interactant>
    <interactant intactId="EBI-394357">
        <id>Q93074</id>
        <label>MED12</label>
    </interactant>
    <organismsDiffer>false</organismsDiffer>
    <experiments>2</experiments>
</comment>
<comment type="interaction">
    <interactant intactId="EBI-25646567">
        <id>Q06481-5</id>
    </interactant>
    <interactant intactId="EBI-1222467">
        <id>P02649</id>
        <label>APOE</label>
    </interactant>
    <organismsDiffer>false</organismsDiffer>
    <experiments>3</experiments>
</comment>
<comment type="interaction">
    <interactant intactId="EBI-25646567">
        <id>Q06481-5</id>
    </interactant>
    <interactant intactId="EBI-77613">
        <id>P05067</id>
        <label>APP</label>
    </interactant>
    <organismsDiffer>false</organismsDiffer>
    <experiments>3</experiments>
</comment>
<comment type="interaction">
    <interactant intactId="EBI-25646567">
        <id>Q06481-5</id>
    </interactant>
    <interactant intactId="EBI-2690445">
        <id>Q96GW7</id>
        <label>BCAN</label>
    </interactant>
    <organismsDiffer>false</organismsDiffer>
    <experiments>3</experiments>
</comment>
<comment type="interaction">
    <interactant intactId="EBI-25646567">
        <id>Q06481-5</id>
    </interactant>
    <interactant intactId="EBI-718504">
        <id>Q13867</id>
        <label>BLMH</label>
    </interactant>
    <organismsDiffer>false</organismsDiffer>
    <experiments>3</experiments>
</comment>
<comment type="interaction">
    <interactant intactId="EBI-25646567">
        <id>Q06481-5</id>
    </interactant>
    <interactant intactId="EBI-541644">
        <id>Q9BS26</id>
        <label>ERP44</label>
    </interactant>
    <organismsDiffer>false</organismsDiffer>
    <experiments>3</experiments>
</comment>
<comment type="interaction">
    <interactant intactId="EBI-25646567">
        <id>Q06481-5</id>
    </interactant>
    <interactant intactId="EBI-25856644">
        <id>Q06787-7</id>
        <label>FMR1</label>
    </interactant>
    <organismsDiffer>false</organismsDiffer>
    <experiments>3</experiments>
</comment>
<comment type="interaction">
    <interactant intactId="EBI-25646567">
        <id>Q06481-5</id>
    </interactant>
    <interactant intactId="EBI-515315">
        <id>P06241</id>
        <label>FYN</label>
    </interactant>
    <organismsDiffer>false</organismsDiffer>
    <experiments>3</experiments>
</comment>
<comment type="interaction">
    <interactant intactId="EBI-25646567">
        <id>Q06481-5</id>
    </interactant>
    <interactant intactId="EBI-744302">
        <id>P14136</id>
        <label>GFAP</label>
    </interactant>
    <organismsDiffer>false</organismsDiffer>
    <experiments>3</experiments>
</comment>
<comment type="interaction">
    <interactant intactId="EBI-25646567">
        <id>Q06481-5</id>
    </interactant>
    <interactant intactId="EBI-25832196">
        <id>Q14114-3</id>
        <label>LRP8</label>
    </interactant>
    <organismsDiffer>false</organismsDiffer>
    <experiments>3</experiments>
</comment>
<comment type="interaction">
    <interactant intactId="EBI-25646567">
        <id>Q06481-5</id>
    </interactant>
    <interactant intactId="EBI-302319">
        <id>Q96L34</id>
        <label>MARK4</label>
    </interactant>
    <organismsDiffer>false</organismsDiffer>
    <experiments>3</experiments>
</comment>
<comment type="interaction">
    <interactant intactId="EBI-25646567">
        <id>Q06481-5</id>
    </interactant>
    <interactant intactId="EBI-1383528">
        <id>P17252</id>
        <label>PRKCA</label>
    </interactant>
    <organismsDiffer>false</organismsDiffer>
    <experiments>3</experiments>
</comment>
<comment type="interaction">
    <interactant intactId="EBI-25646567">
        <id>Q06481-5</id>
    </interactant>
    <interactant intactId="EBI-1775921">
        <id>P23443</id>
        <label>RPS6KB1</label>
    </interactant>
    <organismsDiffer>false</organismsDiffer>
    <experiments>3</experiments>
</comment>
<comment type="interaction">
    <interactant intactId="EBI-25646567">
        <id>Q06481-5</id>
    </interactant>
    <interactant intactId="EBI-458391">
        <id>P04271</id>
        <label>S100B</label>
    </interactant>
    <organismsDiffer>false</organismsDiffer>
    <experiments>3</experiments>
</comment>
<comment type="interaction">
    <interactant intactId="EBI-25646567">
        <id>Q06481-5</id>
    </interactant>
    <interactant intactId="EBI-11522811">
        <id>Q8IUQ4-2</id>
        <label>SIAH1</label>
    </interactant>
    <organismsDiffer>false</organismsDiffer>
    <experiments>3</experiments>
</comment>
<comment type="interaction">
    <interactant intactId="EBI-25646567">
        <id>Q06481-5</id>
    </interactant>
    <interactant intactId="EBI-347161">
        <id>P84022</id>
        <label>SMAD3</label>
    </interactant>
    <organismsDiffer>false</organismsDiffer>
    <experiments>3</experiments>
</comment>
<comment type="interaction">
    <interactant intactId="EBI-25646567">
        <id>Q06481-5</id>
    </interactant>
    <interactant intactId="EBI-714206">
        <id>Q13190</id>
        <label>STX5</label>
    </interactant>
    <organismsDiffer>false</organismsDiffer>
    <experiments>3</experiments>
</comment>
<comment type="interaction">
    <interactant intactId="EBI-25646567">
        <id>Q06481-5</id>
    </interactant>
    <interactant intactId="EBI-25892332">
        <id>P43405-2</id>
        <label>SYK</label>
    </interactant>
    <organismsDiffer>false</organismsDiffer>
    <experiments>3</experiments>
</comment>
<comment type="interaction">
    <interactant intactId="EBI-25646567">
        <id>Q06481-5</id>
    </interactant>
    <interactant intactId="EBI-25832010">
        <id>Q13428-5</id>
        <label>TCOF1</label>
    </interactant>
    <organismsDiffer>false</organismsDiffer>
    <experiments>3</experiments>
</comment>
<comment type="interaction">
    <interactant intactId="EBI-25646567">
        <id>Q06481-5</id>
    </interactant>
    <interactant intactId="EBI-25832057">
        <id>Q9BX74</id>
        <label>TM2D1</label>
    </interactant>
    <organismsDiffer>false</organismsDiffer>
    <experiments>3</experiments>
</comment>
<comment type="interaction">
    <interactant intactId="EBI-25646567">
        <id>Q06481-5</id>
    </interactant>
    <interactant intactId="EBI-473284">
        <id>Q9BVJ6</id>
        <label>UTP14A</label>
    </interactant>
    <organismsDiffer>false</organismsDiffer>
    <experiments>3</experiments>
</comment>
<comment type="subcellular location">
    <subcellularLocation>
        <location evidence="17">Cell membrane</location>
        <topology evidence="17">Single-pass type I membrane protein</topology>
    </subcellularLocation>
    <subcellularLocation>
        <location evidence="17">Nucleus</location>
    </subcellularLocation>
</comment>
<comment type="alternative products">
    <event type="alternative splicing"/>
    <isoform>
        <id>Q06481-1</id>
        <name>1</name>
        <sequence type="displayed"/>
    </isoform>
    <isoform>
        <id>Q06481-2</id>
        <name>2</name>
        <sequence type="described" ref="VSP_000018"/>
    </isoform>
    <isoform>
        <id>Q06481-3</id>
        <name>3</name>
        <sequence type="described" ref="VSP_000019"/>
    </isoform>
    <isoform>
        <id>Q06481-4</id>
        <name>4</name>
        <sequence type="described" ref="VSP_000018 VSP_046882 VSP_000019"/>
    </isoform>
    <isoform>
        <id>Q06481-5</id>
        <name>5</name>
        <sequence type="described" ref="VSP_030921 VSP_000019"/>
    </isoform>
    <isoform>
        <id>Q06481-6</id>
        <name>6</name>
        <sequence type="described" ref="VSP_046881 VSP_000019"/>
    </isoform>
    <text>Additional isoforms seem to exist.</text>
</comment>
<comment type="tissue specificity">
    <text>Expressed in placenta, brain, heart, lung, liver, kidney and endothelial tissues.</text>
</comment>
<comment type="PTM">
    <text evidence="12">The BPTI/Kunitz inhibitor domain is O-glycosylated.</text>
</comment>
<comment type="similarity">
    <text evidence="6">Belongs to the APP family.</text>
</comment>
<comment type="sequence caution" evidence="17">
    <conflict type="frameshift">
        <sequence resource="EMBL-CDS" id="BAG54641"/>
    </conflict>
</comment>
<organism>
    <name type="scientific">Homo sapiens</name>
    <name type="common">Human</name>
    <dbReference type="NCBI Taxonomy" id="9606"/>
    <lineage>
        <taxon>Eukaryota</taxon>
        <taxon>Metazoa</taxon>
        <taxon>Chordata</taxon>
        <taxon>Craniata</taxon>
        <taxon>Vertebrata</taxon>
        <taxon>Euteleostomi</taxon>
        <taxon>Mammalia</taxon>
        <taxon>Eutheria</taxon>
        <taxon>Euarchontoglires</taxon>
        <taxon>Primates</taxon>
        <taxon>Haplorrhini</taxon>
        <taxon>Catarrhini</taxon>
        <taxon>Hominidae</taxon>
        <taxon>Homo</taxon>
    </lineage>
</organism>
<sequence>MAATGTAAAAATGRLLLLLLVGLTAPALALAGYIEALAANAGTGFAVAEPQIAMFCGKLNMHVNIQTGKWEPDPTGTKSCFETKEEVLQYCQEMYPELQITNVMEANQRVSIDNWCRRDKKQCKSRFVTPFKCLVGEFVSDVLLVPEKCQFFHKERMEVCENHQHWHTVVKEACLTQGMTLYSYGMLLPCGVDQFHGTEYVCCPQTKIIGSVSKEEEEEDEEEEEEEDEEEDYDVYKSEFPTEADLEDFTEAAVDEDDEDEEEGEEVVEDRDYYYDTFKGDDYNEENPTEPGSDGTMSDKEITHDVKAVCSQEAMTGPCRAVMPRWYFDLSKGKCVRFIYGGCGGNRNNFESEDYCMAVCKAMIPPTPLPTNDVDVYFETSADDNEHARFQKAKEQLEIRHRNRMDRVKKEWEEAELQAKNLPKAERQTLIQHFQAMVKALEKEAASEKQQLVETHLARVEAMLNDRRRMALENYLAALQSDPPRPHRILQALRRYVRAENKDRLHTIRHYQHVLAVDPEKAAQMKSQVMTHLHVIEERRNQSLSLLYKVPYVAQEIQEEIDELLQEQRADMDQFTASISETPVDVRVSSEESEEIPPFHPFHPFPALPENEDTQPELYHPMKKGSGVGEQDGGLIGAEEKVINSKNKVDENMVIDETLDVKEMIFNAERVGGLEEERESVGPLREDFSLSSSALIGLLVIAVAIATVIVISLVMLRKRQYGTISHGIVEVDPMLTPEERHLNKMQNHGYENPTYKYLEQMQI</sequence>